<reference key="1">
    <citation type="journal article" date="2003" name="Mol. Microbiol.">
        <title>Genome-based analysis of virulence genes in a non-biofilm-forming Staphylococcus epidermidis strain (ATCC 12228).</title>
        <authorList>
            <person name="Zhang Y.-Q."/>
            <person name="Ren S.-X."/>
            <person name="Li H.-L."/>
            <person name="Wang Y.-X."/>
            <person name="Fu G."/>
            <person name="Yang J."/>
            <person name="Qin Z.-Q."/>
            <person name="Miao Y.-G."/>
            <person name="Wang W.-Y."/>
            <person name="Chen R.-S."/>
            <person name="Shen Y."/>
            <person name="Chen Z."/>
            <person name="Yuan Z.-H."/>
            <person name="Zhao G.-P."/>
            <person name="Qu D."/>
            <person name="Danchin A."/>
            <person name="Wen Y.-M."/>
        </authorList>
    </citation>
    <scope>NUCLEOTIDE SEQUENCE [LARGE SCALE GENOMIC DNA]</scope>
    <source>
        <strain>ATCC 12228 / FDA PCI 1200</strain>
    </source>
</reference>
<proteinExistence type="inferred from homology"/>
<sequence length="352" mass="40285">MTIFSIRSQIIIGVISSVILTTIILVIAYKLMWFNGHMTLTLAITTMITSCLTLSICSIFINPLIQKIKQFNIKTKQFINHEKFIDDETFQSPREIKELNDSFNKMAYEINNQMNMIKNEQQEKTEIIQNLAHDLKTPLAGIRSYSEGLRDGVISDPQEVHEAYEILIKQANRLSILFDDITHVINLNTGRSYPLELIQLDQLLVNILQPYEQHIKQENRTLEVNFCTDIDAFYQYRPPIERILTNLLDNALKFSNSGSRIDIIISECKENDVISISIKDEGIGIVPELQSRIFERTFRVEDSRNTKTGGSGLGLYIANELAQQIDASITVQSDLDIGTTMTLTLKKFQFKK</sequence>
<gene>
    <name type="primary">saeS</name>
    <name type="ordered locus">SE_0478</name>
</gene>
<protein>
    <recommendedName>
        <fullName>Histidine protein kinase SaeS</fullName>
        <ecNumber>2.7.13.3</ecNumber>
    </recommendedName>
    <alternativeName>
        <fullName>Sensor protein SaeS</fullName>
    </alternativeName>
</protein>
<organism>
    <name type="scientific">Staphylococcus epidermidis (strain ATCC 12228 / FDA PCI 1200)</name>
    <dbReference type="NCBI Taxonomy" id="176280"/>
    <lineage>
        <taxon>Bacteria</taxon>
        <taxon>Bacillati</taxon>
        <taxon>Bacillota</taxon>
        <taxon>Bacilli</taxon>
        <taxon>Bacillales</taxon>
        <taxon>Staphylococcaceae</taxon>
        <taxon>Staphylococcus</taxon>
    </lineage>
</organism>
<dbReference type="EC" id="2.7.13.3"/>
<dbReference type="EMBL" id="AE015929">
    <property type="protein sequence ID" value="AAO04075.1"/>
    <property type="status" value="ALT_INIT"/>
    <property type="molecule type" value="Genomic_DNA"/>
</dbReference>
<dbReference type="RefSeq" id="NP_764033.1">
    <property type="nucleotide sequence ID" value="NC_004461.1"/>
</dbReference>
<dbReference type="SMR" id="Q8CTI3"/>
<dbReference type="KEGG" id="sep:SE_0478"/>
<dbReference type="PATRIC" id="fig|176280.10.peg.450"/>
<dbReference type="eggNOG" id="COG5002">
    <property type="taxonomic scope" value="Bacteria"/>
</dbReference>
<dbReference type="HOGENOM" id="CLU_000445_89_3_9"/>
<dbReference type="OrthoDB" id="335833at2"/>
<dbReference type="Proteomes" id="UP000001411">
    <property type="component" value="Chromosome"/>
</dbReference>
<dbReference type="GO" id="GO:0005886">
    <property type="term" value="C:plasma membrane"/>
    <property type="evidence" value="ECO:0007669"/>
    <property type="project" value="UniProtKB-SubCell"/>
</dbReference>
<dbReference type="GO" id="GO:0005524">
    <property type="term" value="F:ATP binding"/>
    <property type="evidence" value="ECO:0007669"/>
    <property type="project" value="UniProtKB-KW"/>
</dbReference>
<dbReference type="GO" id="GO:0004721">
    <property type="term" value="F:phosphoprotein phosphatase activity"/>
    <property type="evidence" value="ECO:0007669"/>
    <property type="project" value="TreeGrafter"/>
</dbReference>
<dbReference type="GO" id="GO:0000155">
    <property type="term" value="F:phosphorelay sensor kinase activity"/>
    <property type="evidence" value="ECO:0007669"/>
    <property type="project" value="InterPro"/>
</dbReference>
<dbReference type="GO" id="GO:0016036">
    <property type="term" value="P:cellular response to phosphate starvation"/>
    <property type="evidence" value="ECO:0007669"/>
    <property type="project" value="TreeGrafter"/>
</dbReference>
<dbReference type="CDD" id="cd00082">
    <property type="entry name" value="HisKA"/>
    <property type="match status" value="1"/>
</dbReference>
<dbReference type="Gene3D" id="1.10.287.130">
    <property type="match status" value="1"/>
</dbReference>
<dbReference type="Gene3D" id="3.30.565.10">
    <property type="entry name" value="Histidine kinase-like ATPase, C-terminal domain"/>
    <property type="match status" value="1"/>
</dbReference>
<dbReference type="InterPro" id="IPR050351">
    <property type="entry name" value="2-comp_sensor_kinase"/>
</dbReference>
<dbReference type="InterPro" id="IPR036890">
    <property type="entry name" value="HATPase_C_sf"/>
</dbReference>
<dbReference type="InterPro" id="IPR005467">
    <property type="entry name" value="His_kinase_dom"/>
</dbReference>
<dbReference type="InterPro" id="IPR003661">
    <property type="entry name" value="HisK_dim/P_dom"/>
</dbReference>
<dbReference type="InterPro" id="IPR036097">
    <property type="entry name" value="HisK_dim/P_sf"/>
</dbReference>
<dbReference type="InterPro" id="IPR004358">
    <property type="entry name" value="Sig_transdc_His_kin-like_C"/>
</dbReference>
<dbReference type="PANTHER" id="PTHR45453">
    <property type="entry name" value="PHOSPHATE REGULON SENSOR PROTEIN PHOR"/>
    <property type="match status" value="1"/>
</dbReference>
<dbReference type="PANTHER" id="PTHR45453:SF1">
    <property type="entry name" value="PHOSPHATE REGULON SENSOR PROTEIN PHOR"/>
    <property type="match status" value="1"/>
</dbReference>
<dbReference type="Pfam" id="PF02518">
    <property type="entry name" value="HATPase_c"/>
    <property type="match status" value="1"/>
</dbReference>
<dbReference type="Pfam" id="PF00512">
    <property type="entry name" value="HisKA"/>
    <property type="match status" value="1"/>
</dbReference>
<dbReference type="PRINTS" id="PR00344">
    <property type="entry name" value="BCTRLSENSOR"/>
</dbReference>
<dbReference type="SMART" id="SM00387">
    <property type="entry name" value="HATPase_c"/>
    <property type="match status" value="1"/>
</dbReference>
<dbReference type="SMART" id="SM00388">
    <property type="entry name" value="HisKA"/>
    <property type="match status" value="1"/>
</dbReference>
<dbReference type="SUPFAM" id="SSF55874">
    <property type="entry name" value="ATPase domain of HSP90 chaperone/DNA topoisomerase II/histidine kinase"/>
    <property type="match status" value="1"/>
</dbReference>
<dbReference type="SUPFAM" id="SSF47384">
    <property type="entry name" value="Homodimeric domain of signal transducing histidine kinase"/>
    <property type="match status" value="1"/>
</dbReference>
<dbReference type="PROSITE" id="PS50109">
    <property type="entry name" value="HIS_KIN"/>
    <property type="match status" value="1"/>
</dbReference>
<keyword id="KW-0067">ATP-binding</keyword>
<keyword id="KW-1003">Cell membrane</keyword>
<keyword id="KW-0418">Kinase</keyword>
<keyword id="KW-0472">Membrane</keyword>
<keyword id="KW-0547">Nucleotide-binding</keyword>
<keyword id="KW-0597">Phosphoprotein</keyword>
<keyword id="KW-0808">Transferase</keyword>
<keyword id="KW-0812">Transmembrane</keyword>
<keyword id="KW-1133">Transmembrane helix</keyword>
<keyword id="KW-0902">Two-component regulatory system</keyword>
<accession>Q8CTI3</accession>
<evidence type="ECO:0000250" key="1"/>
<evidence type="ECO:0000255" key="2"/>
<evidence type="ECO:0000255" key="3">
    <source>
        <dbReference type="PROSITE-ProRule" id="PRU00107"/>
    </source>
</evidence>
<evidence type="ECO:0000305" key="4"/>
<comment type="function">
    <text evidence="1">Member of the two-component regulatory system SaeR/SaeS. Probably functions as a membrane-associated protein kinase that upon sensing the appropriate signal, autophosphorylates and in turn activates the cytosolic response regulator SaeR (By similarity).</text>
</comment>
<comment type="catalytic activity">
    <reaction>
        <text>ATP + protein L-histidine = ADP + protein N-phospho-L-histidine.</text>
        <dbReference type="EC" id="2.7.13.3"/>
    </reaction>
</comment>
<comment type="subcellular location">
    <subcellularLocation>
        <location evidence="1">Cell membrane</location>
        <topology evidence="1">Multi-pass membrane protein</topology>
    </subcellularLocation>
</comment>
<comment type="PTM">
    <text evidence="1">Autophosphorylated.</text>
</comment>
<comment type="sequence caution" evidence="4">
    <conflict type="erroneous initiation">
        <sequence resource="EMBL-CDS" id="AAO04075"/>
    </conflict>
</comment>
<name>SAES_STAES</name>
<feature type="chain" id="PRO_0000295939" description="Histidine protein kinase SaeS">
    <location>
        <begin position="1"/>
        <end position="352"/>
    </location>
</feature>
<feature type="transmembrane region" description="Helical" evidence="2">
    <location>
        <begin position="9"/>
        <end position="29"/>
    </location>
</feature>
<feature type="transmembrane region" description="Helical" evidence="2">
    <location>
        <begin position="41"/>
        <end position="61"/>
    </location>
</feature>
<feature type="domain" description="Histidine kinase" evidence="3">
    <location>
        <begin position="130"/>
        <end position="349"/>
    </location>
</feature>
<feature type="modified residue" description="Phosphohistidine; by autocatalysis" evidence="3">
    <location>
        <position position="133"/>
    </location>
</feature>